<protein>
    <recommendedName>
        <fullName evidence="3">Turripeptide Gsp9.1</fullName>
    </recommendedName>
</protein>
<accession>P0C845</accession>
<proteinExistence type="inferred from homology"/>
<feature type="signal peptide" evidence="2">
    <location>
        <begin position="1"/>
        <end position="23"/>
    </location>
</feature>
<feature type="propeptide" id="PRO_0000346142" evidence="1">
    <location>
        <begin position="24"/>
        <end position="46"/>
    </location>
</feature>
<feature type="peptide" id="PRO_0000346143" description="Turripeptide Gsp9.1">
    <location>
        <begin position="47"/>
        <end position="82"/>
    </location>
</feature>
<feature type="modified residue" description="4-hydroxyproline" evidence="1">
    <location>
        <position position="49"/>
    </location>
</feature>
<feature type="modified residue" description="4-hydroxyproline" evidence="1">
    <location>
        <position position="50"/>
    </location>
</feature>
<feature type="modified residue" description="4-carboxyglutamate" evidence="1">
    <location>
        <position position="60"/>
    </location>
</feature>
<feature type="modified residue" description="4-carboxyglutamate" evidence="1">
    <location>
        <position position="63"/>
    </location>
</feature>
<feature type="disulfide bond" evidence="1">
    <location>
        <begin position="53"/>
        <end position="68"/>
    </location>
</feature>
<feature type="disulfide bond" evidence="1">
    <location>
        <begin position="58"/>
        <end position="72"/>
    </location>
</feature>
<feature type="disulfide bond" evidence="1">
    <location>
        <begin position="64"/>
        <end position="79"/>
    </location>
</feature>
<organism>
    <name type="scientific">Gemmula speciosa</name>
    <name type="common">Splendid gem-turris</name>
    <name type="synonym">Pleurotoma speciosa</name>
    <dbReference type="NCBI Taxonomy" id="439592"/>
    <lineage>
        <taxon>Eukaryota</taxon>
        <taxon>Metazoa</taxon>
        <taxon>Spiralia</taxon>
        <taxon>Lophotrochozoa</taxon>
        <taxon>Mollusca</taxon>
        <taxon>Gastropoda</taxon>
        <taxon>Caenogastropoda</taxon>
        <taxon>Neogastropoda</taxon>
        <taxon>Conoidea</taxon>
        <taxon>Turridae</taxon>
        <taxon>Gemmula</taxon>
    </lineage>
</organism>
<keyword id="KW-1015">Disulfide bond</keyword>
<keyword id="KW-0301">Gamma-carboxyglutamic acid</keyword>
<keyword id="KW-0379">Hydroxylation</keyword>
<keyword id="KW-0964">Secreted</keyword>
<keyword id="KW-0732">Signal</keyword>
<keyword id="KW-0800">Toxin</keyword>
<dbReference type="GO" id="GO:0005576">
    <property type="term" value="C:extracellular region"/>
    <property type="evidence" value="ECO:0007669"/>
    <property type="project" value="UniProtKB-SubCell"/>
</dbReference>
<dbReference type="GO" id="GO:0090729">
    <property type="term" value="F:toxin activity"/>
    <property type="evidence" value="ECO:0007669"/>
    <property type="project" value="UniProtKB-KW"/>
</dbReference>
<dbReference type="InterPro" id="IPR026210">
    <property type="entry name" value="Toxin_Pg"/>
</dbReference>
<dbReference type="PRINTS" id="PR02080">
    <property type="entry name" value="TOXINPGFAMLY"/>
</dbReference>
<sequence length="82" mass="9290">MMAKLMITVMMVLLLSLQQGADGRSKRWRKNQMAASSIMRNLITARVDPPRFCNHKICYEDSECSQWCTAGCNSITSKCDTL</sequence>
<name>C91_GEMSP</name>
<reference key="1">
    <citation type="journal article" date="2008" name="Toxicon">
        <title>A rapidly diverging superfamily of peptide toxins in venomous Gemmula species.</title>
        <authorList>
            <person name="Heralde F.M. III"/>
            <person name="Imperial J."/>
            <person name="Bandyopadhyay P.K."/>
            <person name="Olivera B.M."/>
            <person name="Concepcion G.P."/>
            <person name="Santos A.D."/>
        </authorList>
    </citation>
    <scope>NUCLEOTIDE SEQUENCE [MRNA]</scope>
    <source>
        <tissue>Venom duct</tissue>
    </source>
</reference>
<evidence type="ECO:0000250" key="1"/>
<evidence type="ECO:0000255" key="2"/>
<evidence type="ECO:0000303" key="3">
    <source>
    </source>
</evidence>
<evidence type="ECO:0000305" key="4"/>
<evidence type="ECO:0000305" key="5">
    <source>
    </source>
</evidence>
<comment type="subcellular location">
    <subcellularLocation>
        <location evidence="5">Secreted</location>
    </subcellularLocation>
</comment>
<comment type="tissue specificity">
    <text evidence="5">Expressed by the venom duct.</text>
</comment>
<comment type="domain">
    <text evidence="4">The cysteine framework is IX (C-C-C-C-C-C).</text>
</comment>
<comment type="similarity">
    <text evidence="4">Belongs to the Pg turripeptide superfamily.</text>
</comment>